<proteinExistence type="evidence at protein level"/>
<comment type="function">
    <text evidence="1">Plays an important role in the organization of the cytoskeleton. Binds to and sequesters actin monomers (G actin) and therefore inhibits actin polymerization (By similarity).</text>
</comment>
<comment type="interaction">
    <interactant intactId="EBI-2688673">
        <id>P63313</id>
    </interactant>
    <interactant intactId="EBI-3905054">
        <id>P13196</id>
        <label>ALAS1</label>
    </interactant>
    <organismsDiffer>false</organismsDiffer>
    <experiments>6</experiments>
</comment>
<comment type="interaction">
    <interactant intactId="EBI-2688673">
        <id>P63313</id>
    </interactant>
    <interactant intactId="EBI-1044640">
        <id>Q9BYQ4</id>
        <label>KRTAP9-2</label>
    </interactant>
    <organismsDiffer>false</organismsDiffer>
    <experiments>3</experiments>
</comment>
<comment type="interaction">
    <interactant intactId="EBI-2688673">
        <id>P63313</id>
    </interactant>
    <interactant intactId="EBI-752420">
        <id>Q9NUX5</id>
        <label>POT1</label>
    </interactant>
    <organismsDiffer>false</organismsDiffer>
    <experiments>2</experiments>
</comment>
<comment type="subcellular location">
    <subcellularLocation>
        <location>Cytoplasm</location>
        <location>Cytoskeleton</location>
    </subcellularLocation>
</comment>
<comment type="developmental stage">
    <text evidence="5">Found to decrease dramatically after birth.</text>
</comment>
<comment type="similarity">
    <text evidence="6">Belongs to the thymosin beta family.</text>
</comment>
<comment type="sequence caution" evidence="6">
    <conflict type="erroneous initiation">
        <sequence resource="EMBL-CDS" id="AAA36746"/>
    </conflict>
</comment>
<comment type="sequence caution" evidence="6">
    <conflict type="erroneous initiation">
        <sequence resource="EMBL-CDS" id="AAC41691"/>
    </conflict>
</comment>
<comment type="online information" name="Atlas of Genetics and Cytogenetics in Oncology and Haematology">
    <link uri="https://atlasgeneticsoncology.org/gene/42595/TMSB10"/>
</comment>
<gene>
    <name type="primary">TMSB10</name>
    <name type="synonym">PTMB10</name>
    <name type="synonym">THYB10</name>
</gene>
<sequence length="44" mass="5026">MADKPDMGEIASFDKAKLKKTETQEKNTLPTKETIEQEKRSEIS</sequence>
<protein>
    <recommendedName>
        <fullName>Thymosin beta-10</fullName>
    </recommendedName>
</protein>
<reference key="1">
    <citation type="journal article" date="1988" name="Biochem. Biophys. Res. Commun.">
        <title>Sequence of a human kidney cDNA clone encoding thymosin beta 10.</title>
        <authorList>
            <person name="McCreary V."/>
            <person name="Kartha S."/>
            <person name="Bell G.I."/>
            <person name="Toback F.G."/>
        </authorList>
    </citation>
    <scope>NUCLEOTIDE SEQUENCE [MRNA]</scope>
    <source>
        <tissue>Kidney</tissue>
    </source>
</reference>
<reference key="2">
    <citation type="journal article" date="1990" name="Brain Res. Mol. Brain Res.">
        <title>Thymosin beta 10 levels in developing human brain and its regulation by retinoic acid in the HTB-10 neuroblastoma.</title>
        <authorList>
            <person name="Hall A.K."/>
            <person name="Hempstead J."/>
            <person name="Morgan J.I."/>
        </authorList>
    </citation>
    <scope>NUCLEOTIDE SEQUENCE [MRNA]</scope>
    <scope>DEVELOPMENTAL STAGE</scope>
    <source>
        <tissue>Brain</tissue>
    </source>
</reference>
<reference key="3">
    <citation type="journal article" date="1993" name="Int. J. Cancer">
        <title>Thymosin beta-10 expression in melanoma cell lines and melanocytic lesions: a new progression marker for human cutaneous melanoma.</title>
        <authorList>
            <person name="Weterman M.A."/>
            <person name="van Muijen G.N.P."/>
            <person name="Ruiter D.J."/>
            <person name="Bloemers H.P.J."/>
        </authorList>
    </citation>
    <scope>NUCLEOTIDE SEQUENCE [MRNA]</scope>
</reference>
<reference key="4">
    <citation type="submission" date="1992-04" db="EMBL/GenBank/DDBJ databases">
        <title>Human thymosin beta 10 gene: its characterization and nucleotide sequence.</title>
        <authorList>
            <person name="Condon M.R."/>
            <person name="Hall A.K."/>
        </authorList>
    </citation>
    <scope>NUCLEOTIDE SEQUENCE [GENOMIC DNA]</scope>
</reference>
<reference key="5">
    <citation type="submission" date="2003-10" db="EMBL/GenBank/DDBJ databases">
        <title>Identification of a migration inducing gene.</title>
        <authorList>
            <person name="Kim J.W."/>
        </authorList>
    </citation>
    <scope>NUCLEOTIDE SEQUENCE [LARGE SCALE MRNA]</scope>
</reference>
<reference key="6">
    <citation type="journal article" date="2004" name="Nat. Genet.">
        <title>Complete sequencing and characterization of 21,243 full-length human cDNAs.</title>
        <authorList>
            <person name="Ota T."/>
            <person name="Suzuki Y."/>
            <person name="Nishikawa T."/>
            <person name="Otsuki T."/>
            <person name="Sugiyama T."/>
            <person name="Irie R."/>
            <person name="Wakamatsu A."/>
            <person name="Hayashi K."/>
            <person name="Sato H."/>
            <person name="Nagai K."/>
            <person name="Kimura K."/>
            <person name="Makita H."/>
            <person name="Sekine M."/>
            <person name="Obayashi M."/>
            <person name="Nishi T."/>
            <person name="Shibahara T."/>
            <person name="Tanaka T."/>
            <person name="Ishii S."/>
            <person name="Yamamoto J."/>
            <person name="Saito K."/>
            <person name="Kawai Y."/>
            <person name="Isono Y."/>
            <person name="Nakamura Y."/>
            <person name="Nagahari K."/>
            <person name="Murakami K."/>
            <person name="Yasuda T."/>
            <person name="Iwayanagi T."/>
            <person name="Wagatsuma M."/>
            <person name="Shiratori A."/>
            <person name="Sudo H."/>
            <person name="Hosoiri T."/>
            <person name="Kaku Y."/>
            <person name="Kodaira H."/>
            <person name="Kondo H."/>
            <person name="Sugawara M."/>
            <person name="Takahashi M."/>
            <person name="Kanda K."/>
            <person name="Yokoi T."/>
            <person name="Furuya T."/>
            <person name="Kikkawa E."/>
            <person name="Omura Y."/>
            <person name="Abe K."/>
            <person name="Kamihara K."/>
            <person name="Katsuta N."/>
            <person name="Sato K."/>
            <person name="Tanikawa M."/>
            <person name="Yamazaki M."/>
            <person name="Ninomiya K."/>
            <person name="Ishibashi T."/>
            <person name="Yamashita H."/>
            <person name="Murakawa K."/>
            <person name="Fujimori K."/>
            <person name="Tanai H."/>
            <person name="Kimata M."/>
            <person name="Watanabe M."/>
            <person name="Hiraoka S."/>
            <person name="Chiba Y."/>
            <person name="Ishida S."/>
            <person name="Ono Y."/>
            <person name="Takiguchi S."/>
            <person name="Watanabe S."/>
            <person name="Yosida M."/>
            <person name="Hotuta T."/>
            <person name="Kusano J."/>
            <person name="Kanehori K."/>
            <person name="Takahashi-Fujii A."/>
            <person name="Hara H."/>
            <person name="Tanase T.-O."/>
            <person name="Nomura Y."/>
            <person name="Togiya S."/>
            <person name="Komai F."/>
            <person name="Hara R."/>
            <person name="Takeuchi K."/>
            <person name="Arita M."/>
            <person name="Imose N."/>
            <person name="Musashino K."/>
            <person name="Yuuki H."/>
            <person name="Oshima A."/>
            <person name="Sasaki N."/>
            <person name="Aotsuka S."/>
            <person name="Yoshikawa Y."/>
            <person name="Matsunawa H."/>
            <person name="Ichihara T."/>
            <person name="Shiohata N."/>
            <person name="Sano S."/>
            <person name="Moriya S."/>
            <person name="Momiyama H."/>
            <person name="Satoh N."/>
            <person name="Takami S."/>
            <person name="Terashima Y."/>
            <person name="Suzuki O."/>
            <person name="Nakagawa S."/>
            <person name="Senoh A."/>
            <person name="Mizoguchi H."/>
            <person name="Goto Y."/>
            <person name="Shimizu F."/>
            <person name="Wakebe H."/>
            <person name="Hishigaki H."/>
            <person name="Watanabe T."/>
            <person name="Sugiyama A."/>
            <person name="Takemoto M."/>
            <person name="Kawakami B."/>
            <person name="Yamazaki M."/>
            <person name="Watanabe K."/>
            <person name="Kumagai A."/>
            <person name="Itakura S."/>
            <person name="Fukuzumi Y."/>
            <person name="Fujimori Y."/>
            <person name="Komiyama M."/>
            <person name="Tashiro H."/>
            <person name="Tanigami A."/>
            <person name="Fujiwara T."/>
            <person name="Ono T."/>
            <person name="Yamada K."/>
            <person name="Fujii Y."/>
            <person name="Ozaki K."/>
            <person name="Hirao M."/>
            <person name="Ohmori Y."/>
            <person name="Kawabata A."/>
            <person name="Hikiji T."/>
            <person name="Kobatake N."/>
            <person name="Inagaki H."/>
            <person name="Ikema Y."/>
            <person name="Okamoto S."/>
            <person name="Okitani R."/>
            <person name="Kawakami T."/>
            <person name="Noguchi S."/>
            <person name="Itoh T."/>
            <person name="Shigeta K."/>
            <person name="Senba T."/>
            <person name="Matsumura K."/>
            <person name="Nakajima Y."/>
            <person name="Mizuno T."/>
            <person name="Morinaga M."/>
            <person name="Sasaki M."/>
            <person name="Togashi T."/>
            <person name="Oyama M."/>
            <person name="Hata H."/>
            <person name="Watanabe M."/>
            <person name="Komatsu T."/>
            <person name="Mizushima-Sugano J."/>
            <person name="Satoh T."/>
            <person name="Shirai Y."/>
            <person name="Takahashi Y."/>
            <person name="Nakagawa K."/>
            <person name="Okumura K."/>
            <person name="Nagase T."/>
            <person name="Nomura N."/>
            <person name="Kikuchi H."/>
            <person name="Masuho Y."/>
            <person name="Yamashita R."/>
            <person name="Nakai K."/>
            <person name="Yada T."/>
            <person name="Nakamura Y."/>
            <person name="Ohara O."/>
            <person name="Isogai T."/>
            <person name="Sugano S."/>
        </authorList>
    </citation>
    <scope>NUCLEOTIDE SEQUENCE [LARGE SCALE MRNA]</scope>
    <source>
        <tissue>Thymus</tissue>
    </source>
</reference>
<reference key="7">
    <citation type="journal article" date="2005" name="Nature">
        <title>Generation and annotation of the DNA sequences of human chromosomes 2 and 4.</title>
        <authorList>
            <person name="Hillier L.W."/>
            <person name="Graves T.A."/>
            <person name="Fulton R.S."/>
            <person name="Fulton L.A."/>
            <person name="Pepin K.H."/>
            <person name="Minx P."/>
            <person name="Wagner-McPherson C."/>
            <person name="Layman D."/>
            <person name="Wylie K."/>
            <person name="Sekhon M."/>
            <person name="Becker M.C."/>
            <person name="Fewell G.A."/>
            <person name="Delehaunty K.D."/>
            <person name="Miner T.L."/>
            <person name="Nash W.E."/>
            <person name="Kremitzki C."/>
            <person name="Oddy L."/>
            <person name="Du H."/>
            <person name="Sun H."/>
            <person name="Bradshaw-Cordum H."/>
            <person name="Ali J."/>
            <person name="Carter J."/>
            <person name="Cordes M."/>
            <person name="Harris A."/>
            <person name="Isak A."/>
            <person name="van Brunt A."/>
            <person name="Nguyen C."/>
            <person name="Du F."/>
            <person name="Courtney L."/>
            <person name="Kalicki J."/>
            <person name="Ozersky P."/>
            <person name="Abbott S."/>
            <person name="Armstrong J."/>
            <person name="Belter E.A."/>
            <person name="Caruso L."/>
            <person name="Cedroni M."/>
            <person name="Cotton M."/>
            <person name="Davidson T."/>
            <person name="Desai A."/>
            <person name="Elliott G."/>
            <person name="Erb T."/>
            <person name="Fronick C."/>
            <person name="Gaige T."/>
            <person name="Haakenson W."/>
            <person name="Haglund K."/>
            <person name="Holmes A."/>
            <person name="Harkins R."/>
            <person name="Kim K."/>
            <person name="Kruchowski S.S."/>
            <person name="Strong C.M."/>
            <person name="Grewal N."/>
            <person name="Goyea E."/>
            <person name="Hou S."/>
            <person name="Levy A."/>
            <person name="Martinka S."/>
            <person name="Mead K."/>
            <person name="McLellan M.D."/>
            <person name="Meyer R."/>
            <person name="Randall-Maher J."/>
            <person name="Tomlinson C."/>
            <person name="Dauphin-Kohlberg S."/>
            <person name="Kozlowicz-Reilly A."/>
            <person name="Shah N."/>
            <person name="Swearengen-Shahid S."/>
            <person name="Snider J."/>
            <person name="Strong J.T."/>
            <person name="Thompson J."/>
            <person name="Yoakum M."/>
            <person name="Leonard S."/>
            <person name="Pearman C."/>
            <person name="Trani L."/>
            <person name="Radionenko M."/>
            <person name="Waligorski J.E."/>
            <person name="Wang C."/>
            <person name="Rock S.M."/>
            <person name="Tin-Wollam A.-M."/>
            <person name="Maupin R."/>
            <person name="Latreille P."/>
            <person name="Wendl M.C."/>
            <person name="Yang S.-P."/>
            <person name="Pohl C."/>
            <person name="Wallis J.W."/>
            <person name="Spieth J."/>
            <person name="Bieri T.A."/>
            <person name="Berkowicz N."/>
            <person name="Nelson J.O."/>
            <person name="Osborne J."/>
            <person name="Ding L."/>
            <person name="Meyer R."/>
            <person name="Sabo A."/>
            <person name="Shotland Y."/>
            <person name="Sinha P."/>
            <person name="Wohldmann P.E."/>
            <person name="Cook L.L."/>
            <person name="Hickenbotham M.T."/>
            <person name="Eldred J."/>
            <person name="Williams D."/>
            <person name="Jones T.A."/>
            <person name="She X."/>
            <person name="Ciccarelli F.D."/>
            <person name="Izaurralde E."/>
            <person name="Taylor J."/>
            <person name="Schmutz J."/>
            <person name="Myers R.M."/>
            <person name="Cox D.R."/>
            <person name="Huang X."/>
            <person name="McPherson J.D."/>
            <person name="Mardis E.R."/>
            <person name="Clifton S.W."/>
            <person name="Warren W.C."/>
            <person name="Chinwalla A.T."/>
            <person name="Eddy S.R."/>
            <person name="Marra M.A."/>
            <person name="Ovcharenko I."/>
            <person name="Furey T.S."/>
            <person name="Miller W."/>
            <person name="Eichler E.E."/>
            <person name="Bork P."/>
            <person name="Suyama M."/>
            <person name="Torrents D."/>
            <person name="Waterston R.H."/>
            <person name="Wilson R.K."/>
        </authorList>
    </citation>
    <scope>NUCLEOTIDE SEQUENCE [LARGE SCALE GENOMIC DNA]</scope>
</reference>
<reference key="8">
    <citation type="journal article" date="2004" name="Genome Res.">
        <title>The status, quality, and expansion of the NIH full-length cDNA project: the Mammalian Gene Collection (MGC).</title>
        <authorList>
            <consortium name="The MGC Project Team"/>
        </authorList>
    </citation>
    <scope>NUCLEOTIDE SEQUENCE [LARGE SCALE MRNA]</scope>
    <source>
        <tissue>Brain</tissue>
        <tissue>Uterus</tissue>
    </source>
</reference>
<reference key="9">
    <citation type="journal article" date="2008" name="Proc. Natl. Acad. Sci. U.S.A.">
        <title>A quantitative atlas of mitotic phosphorylation.</title>
        <authorList>
            <person name="Dephoure N."/>
            <person name="Zhou C."/>
            <person name="Villen J."/>
            <person name="Beausoleil S.A."/>
            <person name="Bakalarski C.E."/>
            <person name="Elledge S.J."/>
            <person name="Gygi S.P."/>
        </authorList>
    </citation>
    <scope>PHOSPHORYLATION [LARGE SCALE ANALYSIS] AT THR-23</scope>
    <scope>IDENTIFICATION BY MASS SPECTROMETRY [LARGE SCALE ANALYSIS]</scope>
    <source>
        <tissue>Cervix carcinoma</tissue>
    </source>
</reference>
<reference key="10">
    <citation type="journal article" date="2009" name="Anal. Chem.">
        <title>Lys-N and trypsin cover complementary parts of the phosphoproteome in a refined SCX-based approach.</title>
        <authorList>
            <person name="Gauci S."/>
            <person name="Helbig A.O."/>
            <person name="Slijper M."/>
            <person name="Krijgsveld J."/>
            <person name="Heck A.J."/>
            <person name="Mohammed S."/>
        </authorList>
    </citation>
    <scope>ACETYLATION [LARGE SCALE ANALYSIS] AT ALA-2</scope>
    <scope>CLEAVAGE OF INITIATOR METHIONINE [LARGE SCALE ANALYSIS]</scope>
    <scope>IDENTIFICATION BY MASS SPECTROMETRY [LARGE SCALE ANALYSIS]</scope>
</reference>
<reference key="11">
    <citation type="journal article" date="2009" name="Science">
        <title>Lysine acetylation targets protein complexes and co-regulates major cellular functions.</title>
        <authorList>
            <person name="Choudhary C."/>
            <person name="Kumar C."/>
            <person name="Gnad F."/>
            <person name="Nielsen M.L."/>
            <person name="Rehman M."/>
            <person name="Walther T.C."/>
            <person name="Olsen J.V."/>
            <person name="Mann M."/>
        </authorList>
    </citation>
    <scope>ACETYLATION [LARGE SCALE ANALYSIS] AT LYS-4; LYS-15 AND LYS-39</scope>
    <scope>IDENTIFICATION BY MASS SPECTROMETRY [LARGE SCALE ANALYSIS]</scope>
</reference>
<reference key="12">
    <citation type="journal article" date="2011" name="BMC Syst. Biol.">
        <title>Initial characterization of the human central proteome.</title>
        <authorList>
            <person name="Burkard T.R."/>
            <person name="Planyavsky M."/>
            <person name="Kaupe I."/>
            <person name="Breitwieser F.P."/>
            <person name="Buerckstuemmer T."/>
            <person name="Bennett K.L."/>
            <person name="Superti-Furga G."/>
            <person name="Colinge J."/>
        </authorList>
    </citation>
    <scope>IDENTIFICATION BY MASS SPECTROMETRY [LARGE SCALE ANALYSIS]</scope>
</reference>
<reference key="13">
    <citation type="journal article" date="2012" name="Proc. Natl. Acad. Sci. U.S.A.">
        <title>N-terminal acetylome analyses and functional insights of the N-terminal acetyltransferase NatB.</title>
        <authorList>
            <person name="Van Damme P."/>
            <person name="Lasa M."/>
            <person name="Polevoda B."/>
            <person name="Gazquez C."/>
            <person name="Elosegui-Artola A."/>
            <person name="Kim D.S."/>
            <person name="De Juan-Pardo E."/>
            <person name="Demeyer K."/>
            <person name="Hole K."/>
            <person name="Larrea E."/>
            <person name="Timmerman E."/>
            <person name="Prieto J."/>
            <person name="Arnesen T."/>
            <person name="Sherman F."/>
            <person name="Gevaert K."/>
            <person name="Aldabe R."/>
        </authorList>
    </citation>
    <scope>IDENTIFICATION BY MASS SPECTROMETRY [LARGE SCALE ANALYSIS]</scope>
</reference>
<reference key="14">
    <citation type="journal article" date="2013" name="J. Proteome Res.">
        <title>Toward a comprehensive characterization of a human cancer cell phosphoproteome.</title>
        <authorList>
            <person name="Zhou H."/>
            <person name="Di Palma S."/>
            <person name="Preisinger C."/>
            <person name="Peng M."/>
            <person name="Polat A.N."/>
            <person name="Heck A.J."/>
            <person name="Mohammed S."/>
        </authorList>
    </citation>
    <scope>PHOSPHORYLATION [LARGE SCALE ANALYSIS] AT SER-12 AND THR-34</scope>
    <scope>IDENTIFICATION BY MASS SPECTROMETRY [LARGE SCALE ANALYSIS]</scope>
    <source>
        <tissue>Cervix carcinoma</tissue>
        <tissue>Erythroleukemia</tissue>
    </source>
</reference>
<dbReference type="EMBL" id="M20259">
    <property type="protein sequence ID" value="AAA36744.1"/>
    <property type="molecule type" value="mRNA"/>
</dbReference>
<dbReference type="EMBL" id="M92381">
    <property type="protein sequence ID" value="AAC41691.1"/>
    <property type="status" value="ALT_INIT"/>
    <property type="molecule type" value="mRNA"/>
</dbReference>
<dbReference type="EMBL" id="S54005">
    <property type="protein sequence ID" value="AAB25225.1"/>
    <property type="molecule type" value="mRNA"/>
</dbReference>
<dbReference type="EMBL" id="M92383">
    <property type="protein sequence ID" value="AAA36746.1"/>
    <property type="status" value="ALT_INIT"/>
    <property type="molecule type" value="Genomic_DNA"/>
</dbReference>
<dbReference type="EMBL" id="AY453400">
    <property type="protein sequence ID" value="AAS47517.1"/>
    <property type="molecule type" value="mRNA"/>
</dbReference>
<dbReference type="EMBL" id="AK311952">
    <property type="protein sequence ID" value="BAG34892.1"/>
    <property type="molecule type" value="mRNA"/>
</dbReference>
<dbReference type="EMBL" id="AC022210">
    <property type="protein sequence ID" value="AAY24191.1"/>
    <property type="molecule type" value="Genomic_DNA"/>
</dbReference>
<dbReference type="EMBL" id="BC016025">
    <property type="protein sequence ID" value="AAH16025.1"/>
    <property type="molecule type" value="mRNA"/>
</dbReference>
<dbReference type="EMBL" id="BC016731">
    <property type="protein sequence ID" value="AAH16731.1"/>
    <property type="molecule type" value="mRNA"/>
</dbReference>
<dbReference type="CCDS" id="CCDS1970.1"/>
<dbReference type="PIR" id="A27704">
    <property type="entry name" value="A27704"/>
</dbReference>
<dbReference type="RefSeq" id="NP_066926.1">
    <property type="nucleotide sequence ID" value="NM_021103.4"/>
</dbReference>
<dbReference type="SMR" id="P63313"/>
<dbReference type="BioGRID" id="114609">
    <property type="interactions" value="78"/>
</dbReference>
<dbReference type="FunCoup" id="P63313">
    <property type="interactions" value="622"/>
</dbReference>
<dbReference type="IntAct" id="P63313">
    <property type="interactions" value="29"/>
</dbReference>
<dbReference type="STRING" id="9606.ENSP00000233143"/>
<dbReference type="GlyGen" id="P63313">
    <property type="glycosylation" value="3 sites, 2 O-linked glycans (3 sites)"/>
</dbReference>
<dbReference type="iPTMnet" id="P63313"/>
<dbReference type="MetOSite" id="P63313"/>
<dbReference type="PhosphoSitePlus" id="P63313"/>
<dbReference type="BioMuta" id="TMSB10"/>
<dbReference type="DMDM" id="54039778"/>
<dbReference type="jPOST" id="P63313"/>
<dbReference type="MassIVE" id="P63313"/>
<dbReference type="PaxDb" id="9606-ENSP00000233143"/>
<dbReference type="PeptideAtlas" id="P63313"/>
<dbReference type="ProteomicsDB" id="57519"/>
<dbReference type="Pumba" id="P63313"/>
<dbReference type="TopDownProteomics" id="P63313"/>
<dbReference type="Antibodypedia" id="16880">
    <property type="antibodies" value="105 antibodies from 19 providers"/>
</dbReference>
<dbReference type="DNASU" id="9168"/>
<dbReference type="Ensembl" id="ENST00000233143.6">
    <property type="protein sequence ID" value="ENSP00000233143.4"/>
    <property type="gene ID" value="ENSG00000034510.6"/>
</dbReference>
<dbReference type="GeneID" id="9168"/>
<dbReference type="KEGG" id="hsa:9168"/>
<dbReference type="MANE-Select" id="ENST00000233143.6">
    <property type="protein sequence ID" value="ENSP00000233143.4"/>
    <property type="RefSeq nucleotide sequence ID" value="NM_021103.4"/>
    <property type="RefSeq protein sequence ID" value="NP_066926.1"/>
</dbReference>
<dbReference type="UCSC" id="uc002sow.2">
    <property type="organism name" value="human"/>
</dbReference>
<dbReference type="AGR" id="HGNC:11879"/>
<dbReference type="CTD" id="9168"/>
<dbReference type="DisGeNET" id="9168"/>
<dbReference type="GeneCards" id="TMSB10"/>
<dbReference type="HGNC" id="HGNC:11879">
    <property type="gene designation" value="TMSB10"/>
</dbReference>
<dbReference type="HPA" id="ENSG00000034510">
    <property type="expression patterns" value="Low tissue specificity"/>
</dbReference>
<dbReference type="MIM" id="188399">
    <property type="type" value="gene"/>
</dbReference>
<dbReference type="neXtProt" id="NX_P63313"/>
<dbReference type="OpenTargets" id="ENSG00000034510"/>
<dbReference type="PharmGKB" id="PA36580"/>
<dbReference type="VEuPathDB" id="HostDB:ENSG00000034510"/>
<dbReference type="eggNOG" id="KOG4794">
    <property type="taxonomic scope" value="Eukaryota"/>
</dbReference>
<dbReference type="GeneTree" id="ENSGT00940000163007"/>
<dbReference type="HOGENOM" id="CLU_208046_0_1_1"/>
<dbReference type="InParanoid" id="P63313"/>
<dbReference type="OrthoDB" id="2151618at2759"/>
<dbReference type="PAN-GO" id="P63313">
    <property type="GO annotations" value="4 GO annotations based on evolutionary models"/>
</dbReference>
<dbReference type="PhylomeDB" id="P63313"/>
<dbReference type="PathwayCommons" id="P63313"/>
<dbReference type="SignaLink" id="P63313"/>
<dbReference type="BioGRID-ORCS" id="9168">
    <property type="hits" value="239 hits in 1153 CRISPR screens"/>
</dbReference>
<dbReference type="ChiTaRS" id="TMSB10">
    <property type="organism name" value="human"/>
</dbReference>
<dbReference type="GeneWiki" id="TMSB10"/>
<dbReference type="GenomeRNAi" id="9168"/>
<dbReference type="Pharos" id="P63313">
    <property type="development level" value="Tbio"/>
</dbReference>
<dbReference type="PRO" id="PR:P63313"/>
<dbReference type="Proteomes" id="UP000005640">
    <property type="component" value="Chromosome 2"/>
</dbReference>
<dbReference type="Bgee" id="ENSG00000034510">
    <property type="expression patterns" value="Expressed in cortical plate and 213 other cell types or tissues"/>
</dbReference>
<dbReference type="GO" id="GO:0005737">
    <property type="term" value="C:cytoplasm"/>
    <property type="evidence" value="ECO:0000318"/>
    <property type="project" value="GO_Central"/>
</dbReference>
<dbReference type="GO" id="GO:0005856">
    <property type="term" value="C:cytoskeleton"/>
    <property type="evidence" value="ECO:0007669"/>
    <property type="project" value="UniProtKB-SubCell"/>
</dbReference>
<dbReference type="GO" id="GO:0003785">
    <property type="term" value="F:actin monomer binding"/>
    <property type="evidence" value="ECO:0000318"/>
    <property type="project" value="GO_Central"/>
</dbReference>
<dbReference type="GO" id="GO:0007015">
    <property type="term" value="P:actin filament organization"/>
    <property type="evidence" value="ECO:0007669"/>
    <property type="project" value="InterPro"/>
</dbReference>
<dbReference type="GO" id="GO:0030334">
    <property type="term" value="P:regulation of cell migration"/>
    <property type="evidence" value="ECO:0000318"/>
    <property type="project" value="GO_Central"/>
</dbReference>
<dbReference type="FunFam" id="1.20.5.520:FF:000001">
    <property type="entry name" value="Thymosin beta"/>
    <property type="match status" value="1"/>
</dbReference>
<dbReference type="Gene3D" id="1.20.5.520">
    <property type="entry name" value="Single helix bin"/>
    <property type="match status" value="1"/>
</dbReference>
<dbReference type="InterPro" id="IPR001152">
    <property type="entry name" value="Beta-thymosin"/>
</dbReference>
<dbReference type="InterPro" id="IPR038386">
    <property type="entry name" value="Beta-thymosin_sf"/>
</dbReference>
<dbReference type="PANTHER" id="PTHR12021">
    <property type="entry name" value="THYMOSIN BETA"/>
    <property type="match status" value="1"/>
</dbReference>
<dbReference type="PANTHER" id="PTHR12021:SF10">
    <property type="entry name" value="THYMOSIN BETA-10"/>
    <property type="match status" value="1"/>
</dbReference>
<dbReference type="Pfam" id="PF01290">
    <property type="entry name" value="Thymosin"/>
    <property type="match status" value="1"/>
</dbReference>
<dbReference type="PIRSF" id="PIRSF001828">
    <property type="entry name" value="Thymosin_beta"/>
    <property type="match status" value="1"/>
</dbReference>
<dbReference type="SMART" id="SM00152">
    <property type="entry name" value="THY"/>
    <property type="match status" value="1"/>
</dbReference>
<dbReference type="PROSITE" id="PS00500">
    <property type="entry name" value="THYMOSIN_B4"/>
    <property type="match status" value="1"/>
</dbReference>
<keyword id="KW-0007">Acetylation</keyword>
<keyword id="KW-0009">Actin-binding</keyword>
<keyword id="KW-0963">Cytoplasm</keyword>
<keyword id="KW-0206">Cytoskeleton</keyword>
<keyword id="KW-0597">Phosphoprotein</keyword>
<keyword id="KW-1267">Proteomics identification</keyword>
<keyword id="KW-1185">Reference proteome</keyword>
<accession>P63313</accession>
<accession>P13472</accession>
<accession>Q596K9</accession>
<evidence type="ECO:0000250" key="1"/>
<evidence type="ECO:0000250" key="2">
    <source>
        <dbReference type="UniProtKB" id="P63312"/>
    </source>
</evidence>
<evidence type="ECO:0000250" key="3">
    <source>
        <dbReference type="UniProtKB" id="Q6ZWY8"/>
    </source>
</evidence>
<evidence type="ECO:0000256" key="4">
    <source>
        <dbReference type="SAM" id="MobiDB-lite"/>
    </source>
</evidence>
<evidence type="ECO:0000269" key="5">
    <source>
    </source>
</evidence>
<evidence type="ECO:0000305" key="6"/>
<evidence type="ECO:0007744" key="7">
    <source>
    </source>
</evidence>
<evidence type="ECO:0007744" key="8">
    <source>
    </source>
</evidence>
<evidence type="ECO:0007744" key="9">
    <source>
    </source>
</evidence>
<evidence type="ECO:0007744" key="10">
    <source>
    </source>
</evidence>
<feature type="initiator methionine" description="Removed" evidence="8">
    <location>
        <position position="1"/>
    </location>
</feature>
<feature type="chain" id="PRO_0000045931" description="Thymosin beta-10">
    <location>
        <begin position="2"/>
        <end position="44"/>
    </location>
</feature>
<feature type="region of interest" description="Disordered" evidence="4">
    <location>
        <begin position="1"/>
        <end position="44"/>
    </location>
</feature>
<feature type="compositionally biased region" description="Basic and acidic residues" evidence="4">
    <location>
        <begin position="1"/>
        <end position="25"/>
    </location>
</feature>
<feature type="compositionally biased region" description="Basic and acidic residues" evidence="4">
    <location>
        <begin position="33"/>
        <end position="44"/>
    </location>
</feature>
<feature type="modified residue" description="N-acetylalanine" evidence="8">
    <location>
        <position position="2"/>
    </location>
</feature>
<feature type="modified residue" description="N6-acetyllysine" evidence="9">
    <location>
        <position position="4"/>
    </location>
</feature>
<feature type="modified residue" description="Phosphoserine" evidence="10">
    <location>
        <position position="12"/>
    </location>
</feature>
<feature type="modified residue" description="N6-acetyllysine" evidence="9">
    <location>
        <position position="15"/>
    </location>
</feature>
<feature type="modified residue" description="Phosphothreonine" evidence="3">
    <location>
        <position position="21"/>
    </location>
</feature>
<feature type="modified residue" description="Phosphothreonine" evidence="7">
    <location>
        <position position="23"/>
    </location>
</feature>
<feature type="modified residue" description="Phosphothreonine" evidence="10">
    <location>
        <position position="34"/>
    </location>
</feature>
<feature type="modified residue" description="N6-acetyllysine" evidence="9">
    <location>
        <position position="39"/>
    </location>
</feature>
<feature type="modified residue" description="Phosphoserine" evidence="2">
    <location>
        <position position="41"/>
    </location>
</feature>
<feature type="sequence variant" id="VAR_052304" description="In dbSNP:rs1804515.">
    <original>M</original>
    <variation>R</variation>
    <location>
        <position position="7"/>
    </location>
</feature>
<name>TYB10_HUMAN</name>
<organism>
    <name type="scientific">Homo sapiens</name>
    <name type="common">Human</name>
    <dbReference type="NCBI Taxonomy" id="9606"/>
    <lineage>
        <taxon>Eukaryota</taxon>
        <taxon>Metazoa</taxon>
        <taxon>Chordata</taxon>
        <taxon>Craniata</taxon>
        <taxon>Vertebrata</taxon>
        <taxon>Euteleostomi</taxon>
        <taxon>Mammalia</taxon>
        <taxon>Eutheria</taxon>
        <taxon>Euarchontoglires</taxon>
        <taxon>Primates</taxon>
        <taxon>Haplorrhini</taxon>
        <taxon>Catarrhini</taxon>
        <taxon>Hominidae</taxon>
        <taxon>Homo</taxon>
    </lineage>
</organism>